<protein>
    <recommendedName>
        <fullName evidence="1">Co-chaperone protein DjlA</fullName>
    </recommendedName>
</protein>
<reference key="1">
    <citation type="journal article" date="2001" name="Proc. Natl. Acad. Sci. U.S.A.">
        <title>Complete genomic sequence of Pasteurella multocida Pm70.</title>
        <authorList>
            <person name="May B.J."/>
            <person name="Zhang Q."/>
            <person name="Li L.L."/>
            <person name="Paustian M.L."/>
            <person name="Whittam T.S."/>
            <person name="Kapur V."/>
        </authorList>
    </citation>
    <scope>NUCLEOTIDE SEQUENCE [LARGE SCALE GENOMIC DNA]</scope>
    <source>
        <strain>Pm70</strain>
    </source>
</reference>
<accession>Q9CJW3</accession>
<proteinExistence type="inferred from homology"/>
<comment type="function">
    <text evidence="1">Regulatory DnaK co-chaperone. Direct interaction between DnaK and DjlA is needed for the induction of the wcaABCDE operon, involved in the synthesis of a colanic acid polysaccharide capsule, possibly through activation of the RcsB/RcsC phosphotransfer signaling pathway. The colanic acid capsule may help the bacterium survive conditions outside the host.</text>
</comment>
<comment type="subunit">
    <text evidence="1">Homodimer.</text>
</comment>
<comment type="subcellular location">
    <subcellularLocation>
        <location evidence="1">Cell inner membrane</location>
        <topology evidence="1">Single-pass type III membrane protein</topology>
    </subcellularLocation>
</comment>
<comment type="domain">
    <text evidence="1">The transmembrane domain is a dimerization domain.</text>
</comment>
<sequence length="287" mass="32760">MNFIGKFLGLIIGWKLGGFFGAICGVILGHLGDKKLYELGTVNSSFFKSKITRQSLFMQTTFAVLGHLSKAKGRVTEDDIQLASHLMQQMQLDDANRRLAQEAFTRGKAADFPLRQVIREFRLGCGQRADLLRMFLHVQVQAAFADAQLDQSEKDVLYIVGEELGLSRFQFEQMLAMEFAARQFSRAGYQQQNRYQRDYGYQQHQQQYGGYQQQSGPTVDDAYKVLGVSATDDQQTVKRAYRRLMNENHPDKLVAKGLPKEMLEMAKEKTQQIQSAYDLICKTKGWK</sequence>
<name>DJLA_PASMU</name>
<dbReference type="EMBL" id="AE004439">
    <property type="protein sequence ID" value="AAK03962.1"/>
    <property type="molecule type" value="Genomic_DNA"/>
</dbReference>
<dbReference type="RefSeq" id="WP_005755501.1">
    <property type="nucleotide sequence ID" value="NC_002663.1"/>
</dbReference>
<dbReference type="STRING" id="272843.PM1878"/>
<dbReference type="EnsemblBacteria" id="AAK03962">
    <property type="protein sequence ID" value="AAK03962"/>
    <property type="gene ID" value="PM1878"/>
</dbReference>
<dbReference type="KEGG" id="pmu:PM1878"/>
<dbReference type="HOGENOM" id="CLU_066221_1_0_6"/>
<dbReference type="OrthoDB" id="9782583at2"/>
<dbReference type="Proteomes" id="UP000000809">
    <property type="component" value="Chromosome"/>
</dbReference>
<dbReference type="GO" id="GO:0005886">
    <property type="term" value="C:plasma membrane"/>
    <property type="evidence" value="ECO:0007669"/>
    <property type="project" value="UniProtKB-SubCell"/>
</dbReference>
<dbReference type="GO" id="GO:0051087">
    <property type="term" value="F:protein-folding chaperone binding"/>
    <property type="evidence" value="ECO:0007669"/>
    <property type="project" value="InterPro"/>
</dbReference>
<dbReference type="CDD" id="cd06257">
    <property type="entry name" value="DnaJ"/>
    <property type="match status" value="1"/>
</dbReference>
<dbReference type="CDD" id="cd07316">
    <property type="entry name" value="terB_like_DjlA"/>
    <property type="match status" value="1"/>
</dbReference>
<dbReference type="FunFam" id="1.10.287.110:FF:000011">
    <property type="entry name" value="Co-chaperone protein DjlA"/>
    <property type="match status" value="1"/>
</dbReference>
<dbReference type="Gene3D" id="1.10.287.110">
    <property type="entry name" value="DnaJ domain"/>
    <property type="match status" value="1"/>
</dbReference>
<dbReference type="Gene3D" id="1.10.3680.10">
    <property type="entry name" value="TerB-like"/>
    <property type="match status" value="1"/>
</dbReference>
<dbReference type="HAMAP" id="MF_01153">
    <property type="entry name" value="DjlA"/>
    <property type="match status" value="1"/>
</dbReference>
<dbReference type="InterPro" id="IPR023749">
    <property type="entry name" value="DjlA"/>
</dbReference>
<dbReference type="InterPro" id="IPR050817">
    <property type="entry name" value="DjlA_DnaK_co-chaperone"/>
</dbReference>
<dbReference type="InterPro" id="IPR007791">
    <property type="entry name" value="DjlA_N"/>
</dbReference>
<dbReference type="InterPro" id="IPR001623">
    <property type="entry name" value="DnaJ_domain"/>
</dbReference>
<dbReference type="InterPro" id="IPR036869">
    <property type="entry name" value="J_dom_sf"/>
</dbReference>
<dbReference type="InterPro" id="IPR029024">
    <property type="entry name" value="TerB-like"/>
</dbReference>
<dbReference type="NCBIfam" id="NF006948">
    <property type="entry name" value="PRK09430.1"/>
    <property type="match status" value="1"/>
</dbReference>
<dbReference type="PANTHER" id="PTHR24074">
    <property type="entry name" value="CO-CHAPERONE PROTEIN DJLA"/>
    <property type="match status" value="1"/>
</dbReference>
<dbReference type="Pfam" id="PF00226">
    <property type="entry name" value="DnaJ"/>
    <property type="match status" value="1"/>
</dbReference>
<dbReference type="Pfam" id="PF05099">
    <property type="entry name" value="TerB"/>
    <property type="match status" value="1"/>
</dbReference>
<dbReference type="PRINTS" id="PR00625">
    <property type="entry name" value="JDOMAIN"/>
</dbReference>
<dbReference type="SMART" id="SM00271">
    <property type="entry name" value="DnaJ"/>
    <property type="match status" value="1"/>
</dbReference>
<dbReference type="SUPFAM" id="SSF46565">
    <property type="entry name" value="Chaperone J-domain"/>
    <property type="match status" value="1"/>
</dbReference>
<dbReference type="PROSITE" id="PS50076">
    <property type="entry name" value="DNAJ_2"/>
    <property type="match status" value="1"/>
</dbReference>
<organism>
    <name type="scientific">Pasteurella multocida (strain Pm70)</name>
    <dbReference type="NCBI Taxonomy" id="272843"/>
    <lineage>
        <taxon>Bacteria</taxon>
        <taxon>Pseudomonadati</taxon>
        <taxon>Pseudomonadota</taxon>
        <taxon>Gammaproteobacteria</taxon>
        <taxon>Pasteurellales</taxon>
        <taxon>Pasteurellaceae</taxon>
        <taxon>Pasteurella</taxon>
    </lineage>
</organism>
<evidence type="ECO:0000255" key="1">
    <source>
        <dbReference type="HAMAP-Rule" id="MF_01153"/>
    </source>
</evidence>
<keyword id="KW-0997">Cell inner membrane</keyword>
<keyword id="KW-1003">Cell membrane</keyword>
<keyword id="KW-0143">Chaperone</keyword>
<keyword id="KW-0472">Membrane</keyword>
<keyword id="KW-1185">Reference proteome</keyword>
<keyword id="KW-0812">Transmembrane</keyword>
<keyword id="KW-1133">Transmembrane helix</keyword>
<feature type="chain" id="PRO_0000209432" description="Co-chaperone protein DjlA">
    <location>
        <begin position="1"/>
        <end position="287"/>
    </location>
</feature>
<feature type="topological domain" description="Periplasmic" evidence="1">
    <location>
        <begin position="1"/>
        <end position="6"/>
    </location>
</feature>
<feature type="transmembrane region" description="Helical" evidence="1">
    <location>
        <begin position="7"/>
        <end position="30"/>
    </location>
</feature>
<feature type="topological domain" description="Cytoplasmic" evidence="1">
    <location>
        <begin position="31"/>
        <end position="287"/>
    </location>
</feature>
<feature type="domain" description="J" evidence="1">
    <location>
        <begin position="221"/>
        <end position="287"/>
    </location>
</feature>
<gene>
    <name evidence="1" type="primary">djlA</name>
    <name type="ordered locus">PM1878</name>
</gene>